<proteinExistence type="evidence at protein level"/>
<dbReference type="EMBL" id="U18795">
    <property type="protein sequence ID" value="AAB65030.1"/>
    <property type="molecule type" value="Genomic_DNA"/>
</dbReference>
<dbReference type="EMBL" id="AY557813">
    <property type="protein sequence ID" value="AAS56139.1"/>
    <property type="molecule type" value="Genomic_DNA"/>
</dbReference>
<dbReference type="EMBL" id="BK006939">
    <property type="protein sequence ID" value="DAA07597.1"/>
    <property type="molecule type" value="Genomic_DNA"/>
</dbReference>
<dbReference type="PIR" id="S50532">
    <property type="entry name" value="S50532"/>
</dbReference>
<dbReference type="RefSeq" id="NP_010857.1">
    <property type="nucleotide sequence ID" value="NM_001178872.1"/>
</dbReference>
<dbReference type="PDB" id="6SNT">
    <property type="method" value="EM"/>
    <property type="resolution" value="2.80 A"/>
    <property type="chains" value="NC=1-233"/>
</dbReference>
<dbReference type="PDB" id="9F9S">
    <property type="method" value="EM"/>
    <property type="resolution" value="2.90 A"/>
    <property type="chains" value="CC=1-233"/>
</dbReference>
<dbReference type="PDBsum" id="6SNT"/>
<dbReference type="PDBsum" id="9F9S"/>
<dbReference type="EMDB" id="EMD-10262"/>
<dbReference type="EMDB" id="EMD-50259"/>
<dbReference type="BioGRID" id="36672">
    <property type="interactions" value="165"/>
</dbReference>
<dbReference type="DIP" id="DIP-4882N"/>
<dbReference type="FunCoup" id="P39983">
    <property type="interactions" value="61"/>
</dbReference>
<dbReference type="MINT" id="P39983"/>
<dbReference type="STRING" id="4932.YEL057C"/>
<dbReference type="PaxDb" id="4932-YEL057C"/>
<dbReference type="PeptideAtlas" id="P39983"/>
<dbReference type="EnsemblFungi" id="YEL057C_mRNA">
    <property type="protein sequence ID" value="YEL057C"/>
    <property type="gene ID" value="YEL057C"/>
</dbReference>
<dbReference type="GeneID" id="856653"/>
<dbReference type="KEGG" id="sce:YEL057C"/>
<dbReference type="AGR" id="SGD:S000000783"/>
<dbReference type="SGD" id="S000000783">
    <property type="gene designation" value="SDD1"/>
</dbReference>
<dbReference type="VEuPathDB" id="FungiDB:YEL057C"/>
<dbReference type="HOGENOM" id="CLU_103875_0_0_1"/>
<dbReference type="InParanoid" id="P39983"/>
<dbReference type="OMA" id="DCVSRKH"/>
<dbReference type="OrthoDB" id="4055005at2759"/>
<dbReference type="BioCyc" id="YEAST:G3O-30175-MONOMER"/>
<dbReference type="BioGRID-ORCS" id="856653">
    <property type="hits" value="1 hit in 10 CRISPR screens"/>
</dbReference>
<dbReference type="PRO" id="PR:P39983"/>
<dbReference type="Proteomes" id="UP000002311">
    <property type="component" value="Chromosome V"/>
</dbReference>
<dbReference type="RNAct" id="P39983">
    <property type="molecule type" value="protein"/>
</dbReference>
<sequence>MANDGIQRNDNRKGFKTVQFSAYSKEIDVIMKKISFLERNITQQLDTLPHFPKTLPPNHKDCVSRKHRARRGWSSQLKNLLGIYSKEEIFTLDNLAATLHDQVLKLQATLFPNAILKQVHLDNANIENKRILKEITYKYLSNENCKEENKFGTFIVKRIFFGDLSLGVSVLINRIAFESATSSIMVVRSSFIESDFFYEDYLIFDCRAKRRKKLKRKILFISTTMNFNYQTKV</sequence>
<evidence type="ECO:0000269" key="1">
    <source>
    </source>
</evidence>
<evidence type="ECO:0000312" key="2">
    <source>
        <dbReference type="SGD" id="S000000783"/>
    </source>
</evidence>
<evidence type="ECO:0007744" key="3">
    <source>
        <dbReference type="PDB" id="6SNT"/>
    </source>
</evidence>
<comment type="function">
    <text evidence="1">Acts as an endogenous target of the ribosome quality control (RQC) pathway (PubMed:32203490). During translation, the nascent chain has a propensity to stall ribosomes, thereby stimulating activation of the RQC pathway (PubMed:32203490).</text>
</comment>
<gene>
    <name evidence="2" type="primary">SDD1</name>
    <name evidence="2" type="ordered locus">YEL057C</name>
</gene>
<reference key="1">
    <citation type="journal article" date="1997" name="Nature">
        <title>The nucleotide sequence of Saccharomyces cerevisiae chromosome V.</title>
        <authorList>
            <person name="Dietrich F.S."/>
            <person name="Mulligan J.T."/>
            <person name="Hennessy K.M."/>
            <person name="Yelton M.A."/>
            <person name="Allen E."/>
            <person name="Araujo R."/>
            <person name="Aviles E."/>
            <person name="Berno A."/>
            <person name="Brennan T."/>
            <person name="Carpenter J."/>
            <person name="Chen E."/>
            <person name="Cherry J.M."/>
            <person name="Chung E."/>
            <person name="Duncan M."/>
            <person name="Guzman E."/>
            <person name="Hartzell G."/>
            <person name="Hunicke-Smith S."/>
            <person name="Hyman R.W."/>
            <person name="Kayser A."/>
            <person name="Komp C."/>
            <person name="Lashkari D."/>
            <person name="Lew H."/>
            <person name="Lin D."/>
            <person name="Mosedale D."/>
            <person name="Nakahara K."/>
            <person name="Namath A."/>
            <person name="Norgren R."/>
            <person name="Oefner P."/>
            <person name="Oh C."/>
            <person name="Petel F.X."/>
            <person name="Roberts D."/>
            <person name="Sehl P."/>
            <person name="Schramm S."/>
            <person name="Shogren T."/>
            <person name="Smith V."/>
            <person name="Taylor P."/>
            <person name="Wei Y."/>
            <person name="Botstein D."/>
            <person name="Davis R.W."/>
        </authorList>
    </citation>
    <scope>NUCLEOTIDE SEQUENCE [LARGE SCALE GENOMIC DNA]</scope>
    <source>
        <strain>ATCC 204508 / S288c</strain>
    </source>
</reference>
<reference key="2">
    <citation type="journal article" date="2014" name="G3 (Bethesda)">
        <title>The reference genome sequence of Saccharomyces cerevisiae: Then and now.</title>
        <authorList>
            <person name="Engel S.R."/>
            <person name="Dietrich F.S."/>
            <person name="Fisk D.G."/>
            <person name="Binkley G."/>
            <person name="Balakrishnan R."/>
            <person name="Costanzo M.C."/>
            <person name="Dwight S.S."/>
            <person name="Hitz B.C."/>
            <person name="Karra K."/>
            <person name="Nash R.S."/>
            <person name="Weng S."/>
            <person name="Wong E.D."/>
            <person name="Lloyd P."/>
            <person name="Skrzypek M.S."/>
            <person name="Miyasato S.R."/>
            <person name="Simison M."/>
            <person name="Cherry J.M."/>
        </authorList>
    </citation>
    <scope>GENOME REANNOTATION</scope>
    <source>
        <strain>ATCC 204508 / S288c</strain>
    </source>
</reference>
<reference key="3">
    <citation type="journal article" date="2007" name="Genome Res.">
        <title>Approaching a complete repository of sequence-verified protein-encoding clones for Saccharomyces cerevisiae.</title>
        <authorList>
            <person name="Hu Y."/>
            <person name="Rolfs A."/>
            <person name="Bhullar B."/>
            <person name="Murthy T.V.S."/>
            <person name="Zhu C."/>
            <person name="Berger M.F."/>
            <person name="Camargo A.A."/>
            <person name="Kelley F."/>
            <person name="McCarron S."/>
            <person name="Jepson D."/>
            <person name="Richardson A."/>
            <person name="Raphael J."/>
            <person name="Moreira D."/>
            <person name="Taycher E."/>
            <person name="Zuo D."/>
            <person name="Mohr S."/>
            <person name="Kane M.F."/>
            <person name="Williamson J."/>
            <person name="Simpson A.J.G."/>
            <person name="Bulyk M.L."/>
            <person name="Harlow E."/>
            <person name="Marsischky G."/>
            <person name="Kolodner R.D."/>
            <person name="LaBaer J."/>
        </authorList>
    </citation>
    <scope>NUCLEOTIDE SEQUENCE [GENOMIC DNA]</scope>
    <source>
        <strain>ATCC 204508 / S288c</strain>
    </source>
</reference>
<reference evidence="3" key="4">
    <citation type="journal article" date="2020" name="Nat. Struct. Mol. Biol.">
        <title>RQT complex dissociates ribosomes collided on endogenous RQC substrate SDD1.</title>
        <authorList>
            <person name="Matsuo Y."/>
            <person name="Tesina P."/>
            <person name="Nakajima S."/>
            <person name="Mizuno M."/>
            <person name="Endo A."/>
            <person name="Buschauer R."/>
            <person name="Cheng J."/>
            <person name="Shounai O."/>
            <person name="Ikeuchi K."/>
            <person name="Saeki Y."/>
            <person name="Becker T."/>
            <person name="Beckmann R."/>
            <person name="Inada T."/>
        </authorList>
    </citation>
    <scope>STRUCTURE BY ELECTRON MICROSCOPY (2.8 ANGSTROMS) OF 197-210 IN COMPLEX WITH STALLED RIBOSOME</scope>
    <scope>FUNCTION</scope>
    <scope>MUTAGENESIS OF ASP-200; TYR-201; LEU-202; ILE-203; PHE-204; ARG-207; 209-LYS-ARG-210; LYS-209; 210-ARG-ARG-211; ARG-210; ARG-211; 212-LYS-LYS-213 AND LYS-212</scope>
</reference>
<protein>
    <recommendedName>
        <fullName>Uncharacterized protein YEL057C</fullName>
    </recommendedName>
    <alternativeName>
        <fullName evidence="2">Suppressor of degenerative death</fullName>
    </alternativeName>
</protein>
<keyword id="KW-0002">3D-structure</keyword>
<keyword id="KW-1185">Reference proteome</keyword>
<feature type="chain" id="PRO_0000202604" description="Uncharacterized protein YEL057C">
    <location>
        <begin position="1"/>
        <end position="233"/>
    </location>
</feature>
<feature type="region of interest" description="The nascent chain stimulates ribosomal stalling during translation by interfering with the conformation of the peptidyl transferase center (PTC), and the translating mRNA by adopting a difficult-to-decode structure at the ribosome decoding center" evidence="1">
    <location>
        <begin position="196"/>
        <end position="212"/>
    </location>
</feature>
<feature type="mutagenesis site" description="Decreases propensity to stall ribosomes." evidence="1">
    <original>D</original>
    <variation>A</variation>
    <variation>E</variation>
    <variation>R</variation>
    <variation>Y</variation>
    <location>
        <position position="200"/>
    </location>
</feature>
<feature type="mutagenesis site" description="Decreases propensity to stall ribosomes." evidence="1">
    <original>Y</original>
    <variation>A</variation>
    <location>
        <position position="201"/>
    </location>
</feature>
<feature type="mutagenesis site" description="Decreases propensity to stall ribosomes." evidence="1">
    <original>L</original>
    <variation>A</variation>
    <location>
        <position position="202"/>
    </location>
</feature>
<feature type="mutagenesis site" description="Decreases propensity to stall ribosomes." evidence="1">
    <original>I</original>
    <variation>A</variation>
    <location>
        <position position="203"/>
    </location>
</feature>
<feature type="mutagenesis site" description="Decreases propensity to stall ribosomes." evidence="1">
    <original>F</original>
    <variation>A</variation>
    <location>
        <position position="204"/>
    </location>
</feature>
<feature type="mutagenesis site" description="Decreases propensity to stall ribosomes." evidence="1">
    <original>R</original>
    <variation>A</variation>
    <location>
        <position position="207"/>
    </location>
</feature>
<feature type="mutagenesis site" description="Decreases propensity to stall ribosomes." evidence="1">
    <original>KR</original>
    <variation>AA</variation>
    <location>
        <begin position="209"/>
        <end position="210"/>
    </location>
</feature>
<feature type="mutagenesis site" description="Decreases propensity to stall ribosomes." evidence="1">
    <original>K</original>
    <variation>A</variation>
    <location>
        <position position="209"/>
    </location>
</feature>
<feature type="mutagenesis site" description="Decreases propensity to stall ribosomes." evidence="1">
    <original>RR</original>
    <variation>KK</variation>
    <location>
        <begin position="210"/>
        <end position="211"/>
    </location>
</feature>
<feature type="mutagenesis site" description="Decreases propensity to stall ribosomes." evidence="1">
    <original>R</original>
    <variation>A</variation>
    <location>
        <position position="210"/>
    </location>
</feature>
<feature type="mutagenesis site" description="Decreases propensity to stall ribosomes." evidence="1">
    <original>R</original>
    <variation>A</variation>
    <location>
        <position position="211"/>
    </location>
</feature>
<feature type="mutagenesis site" description="Decreases propensity to stall ribosomes." evidence="1">
    <original>KK</original>
    <variation>AA</variation>
    <location>
        <begin position="212"/>
        <end position="213"/>
    </location>
</feature>
<feature type="mutagenesis site" description="Decreases propensity to stall ribosomes." evidence="1">
    <original>K</original>
    <variation>A</variation>
    <location>
        <position position="212"/>
    </location>
</feature>
<organism>
    <name type="scientific">Saccharomyces cerevisiae (strain ATCC 204508 / S288c)</name>
    <name type="common">Baker's yeast</name>
    <dbReference type="NCBI Taxonomy" id="559292"/>
    <lineage>
        <taxon>Eukaryota</taxon>
        <taxon>Fungi</taxon>
        <taxon>Dikarya</taxon>
        <taxon>Ascomycota</taxon>
        <taxon>Saccharomycotina</taxon>
        <taxon>Saccharomycetes</taxon>
        <taxon>Saccharomycetales</taxon>
        <taxon>Saccharomycetaceae</taxon>
        <taxon>Saccharomyces</taxon>
    </lineage>
</organism>
<accession>P39983</accession>
<accession>D3DLJ3</accession>
<name>SDD1_YEAST</name>